<accession>P05429</accession>
<gene>
    <name evidence="1" type="primary">psbB</name>
    <name type="ordered locus">slr0906</name>
</gene>
<evidence type="ECO:0000255" key="1">
    <source>
        <dbReference type="HAMAP-Rule" id="MF_01495"/>
    </source>
</evidence>
<evidence type="ECO:0000269" key="2">
    <source>
    </source>
</evidence>
<evidence type="ECO:0000269" key="3">
    <source>
    </source>
</evidence>
<evidence type="ECO:0000269" key="4">
    <source>
    </source>
</evidence>
<evidence type="ECO:0000312" key="5">
    <source>
        <dbReference type="PDB" id="7N8O"/>
    </source>
</evidence>
<evidence type="ECO:0007744" key="6">
    <source>
        <dbReference type="PDB" id="7N8O"/>
    </source>
</evidence>
<evidence type="ECO:0007744" key="7">
    <source>
        <dbReference type="PDB" id="7RCV"/>
    </source>
</evidence>
<evidence type="ECO:0007829" key="8">
    <source>
        <dbReference type="PDB" id="6WJ6"/>
    </source>
</evidence>
<evidence type="ECO:0007829" key="9">
    <source>
        <dbReference type="PDB" id="7N8O"/>
    </source>
</evidence>
<evidence type="ECO:0007829" key="10">
    <source>
        <dbReference type="PDB" id="8TOW"/>
    </source>
</evidence>
<comment type="function">
    <text evidence="1 4">One of the components of the core complex of photosystem II (PSII). It binds chlorophyll and helps catalyze the primary light-induced photochemical processes of PSII. PSII is a light-driven water:plastoquinone oxidoreductase, using light energy to abstract electrons from H(2)O, generating O(2) and a proton gradient subsequently used for ATP formation.</text>
</comment>
<comment type="cofactor">
    <text evidence="1 4">Binds multiple chlorophylls. PSII binds additional chlorophylls, carotenoids and specific lipids.</text>
</comment>
<comment type="subunit">
    <text evidence="1 2 3 4">PSII is composed of 1 copy each of membrane proteins PsbA, PsbB, PsbC, PsbD, PsbE, PsbF, PsbH, PsbI, PsbJ, PsbK, PsbL, PsbM, PsbT, PsbX, Psb30/Ycf12, peripheral proteins PsbO, CyanoQ (PsbQ), PsbU, PsbV and a large number of cofactors. It forms dimeric complexes (PubMed:12069591, PubMed:34937700). Contacts PsbQ (PubMed:24550459).</text>
</comment>
<comment type="subcellular location">
    <subcellularLocation>
        <location evidence="1 2 3 4">Cellular thylakoid membrane</location>
        <topology evidence="1 4">Multi-pass membrane protein</topology>
    </subcellularLocation>
</comment>
<comment type="similarity">
    <text evidence="1">Belongs to the PsbB/PsbC family. PsbB subfamily.</text>
</comment>
<proteinExistence type="evidence at protein level"/>
<sequence>MGLPWYRVHTVVLNDPGRLISVHLMHTALVAGWAGSMALYELAIFDSSDAVLNPMWRQGMFVLPFMARLGVTSSWNGWSVTGETGLDPGFWSFEGVAAAHIVLSGLLFLAAVWHWVFWDLELFVDPRTGESALDLPKMFGIHLFLSGLLCFGFGAFHLTGVWGPGMWVSDPYGLTGHVQPVAPEWGPAGFNPFNPGGVVAHHIAAGIVGIIAGLFHLTVRPPERLYKALRMGNIETVLSSSIAAVFFAAFVVAGTMWYGNATTPIELFGPTRYQWDKGYFQEEIQRRVDSQLAEGASLSEAWSTIPEKLAFYDYVGNSPAKGGLFRTGAMNSGDGIAQEWIGHPIFKDKEGRELEVRRMPNFFETFPVIMTDADGVVRADIPFRRSESKFSVEQTGVTVSFYGGALDGQTFSNPSDVKKFARKAQLGEGFDFDTETFNSDGVFRTSPRGWFTFGHAVFALLFFFGHIWHGSRTLFRDVFAGVDPGLEEQVEFGVFAKVGDLSTRKEA</sequence>
<keyword id="KW-0002">3D-structure</keyword>
<keyword id="KW-0148">Chlorophyll</keyword>
<keyword id="KW-0157">Chromophore</keyword>
<keyword id="KW-0903">Direct protein sequencing</keyword>
<keyword id="KW-0472">Membrane</keyword>
<keyword id="KW-0602">Photosynthesis</keyword>
<keyword id="KW-0604">Photosystem II</keyword>
<keyword id="KW-1185">Reference proteome</keyword>
<keyword id="KW-0793">Thylakoid</keyword>
<keyword id="KW-0812">Transmembrane</keyword>
<keyword id="KW-1133">Transmembrane helix</keyword>
<dbReference type="EMBL" id="M17109">
    <property type="protein sequence ID" value="AAA27297.1"/>
    <property type="molecule type" value="Genomic_DNA"/>
</dbReference>
<dbReference type="EMBL" id="BA000022">
    <property type="protein sequence ID" value="BAA10458.1"/>
    <property type="molecule type" value="Genomic_DNA"/>
</dbReference>
<dbReference type="PIR" id="S06272">
    <property type="entry name" value="S06272"/>
</dbReference>
<dbReference type="PDB" id="6WJ6">
    <property type="method" value="EM"/>
    <property type="resolution" value="2.58 A"/>
    <property type="chains" value="B=1-507"/>
</dbReference>
<dbReference type="PDB" id="7N8O">
    <property type="method" value="EM"/>
    <property type="resolution" value="1.93 A"/>
    <property type="chains" value="B/b=2-504"/>
</dbReference>
<dbReference type="PDB" id="7RCV">
    <property type="method" value="EM"/>
    <property type="resolution" value="2.01 A"/>
    <property type="chains" value="B/b=2-504"/>
</dbReference>
<dbReference type="PDB" id="8TOW">
    <property type="method" value="EM"/>
    <property type="resolution" value="2.14 A"/>
    <property type="chains" value="B/b=1-507"/>
</dbReference>
<dbReference type="PDB" id="9EH5">
    <property type="method" value="EM"/>
    <property type="resolution" value="1.97 A"/>
    <property type="chains" value="B/b=1-507"/>
</dbReference>
<dbReference type="PDBsum" id="6WJ6"/>
<dbReference type="PDBsum" id="7N8O"/>
<dbReference type="PDBsum" id="7RCV"/>
<dbReference type="PDBsum" id="8TOW"/>
<dbReference type="PDBsum" id="9EH5"/>
<dbReference type="EMDB" id="EMD-21690"/>
<dbReference type="EMDB" id="EMD-24239"/>
<dbReference type="EMDB" id="EMD-24407"/>
<dbReference type="EMDB" id="EMD-41460"/>
<dbReference type="EMDB" id="EMD-48046"/>
<dbReference type="SMR" id="P05429"/>
<dbReference type="IntAct" id="P05429">
    <property type="interactions" value="31"/>
</dbReference>
<dbReference type="STRING" id="1148.gene:10499959"/>
<dbReference type="PaxDb" id="1148-1001216"/>
<dbReference type="EnsemblBacteria" id="BAA10458">
    <property type="protein sequence ID" value="BAA10458"/>
    <property type="gene ID" value="BAA10458"/>
</dbReference>
<dbReference type="KEGG" id="syn:slr0906"/>
<dbReference type="eggNOG" id="ENOG502Z7TN">
    <property type="taxonomic scope" value="Bacteria"/>
</dbReference>
<dbReference type="InParanoid" id="P05429"/>
<dbReference type="BioCyc" id="MetaCyc:PSBB-MONOMER"/>
<dbReference type="Proteomes" id="UP000001425">
    <property type="component" value="Chromosome"/>
</dbReference>
<dbReference type="GO" id="GO:0031676">
    <property type="term" value="C:plasma membrane-derived thylakoid membrane"/>
    <property type="evidence" value="ECO:0007669"/>
    <property type="project" value="UniProtKB-SubCell"/>
</dbReference>
<dbReference type="GO" id="GO:0030096">
    <property type="term" value="C:plasma membrane-derived thylakoid photosystem II"/>
    <property type="evidence" value="ECO:0000314"/>
    <property type="project" value="UniProtKB"/>
</dbReference>
<dbReference type="GO" id="GO:0016168">
    <property type="term" value="F:chlorophyll binding"/>
    <property type="evidence" value="ECO:0007669"/>
    <property type="project" value="UniProtKB-UniRule"/>
</dbReference>
<dbReference type="GO" id="GO:0045156">
    <property type="term" value="F:electron transporter, transferring electrons within the cyclic electron transport pathway of photosynthesis activity"/>
    <property type="evidence" value="ECO:0007669"/>
    <property type="project" value="InterPro"/>
</dbReference>
<dbReference type="GO" id="GO:0009772">
    <property type="term" value="P:photosynthetic electron transport in photosystem II"/>
    <property type="evidence" value="ECO:0007669"/>
    <property type="project" value="InterPro"/>
</dbReference>
<dbReference type="Gene3D" id="3.10.680.10">
    <property type="entry name" value="Photosystem II CP47 reaction center protein"/>
    <property type="match status" value="1"/>
</dbReference>
<dbReference type="HAMAP" id="MF_01495">
    <property type="entry name" value="PSII_PsbB_CP47"/>
    <property type="match status" value="1"/>
</dbReference>
<dbReference type="InterPro" id="IPR000932">
    <property type="entry name" value="PS_antenna-like"/>
</dbReference>
<dbReference type="InterPro" id="IPR036001">
    <property type="entry name" value="PS_II_antenna-like_sf"/>
</dbReference>
<dbReference type="InterPro" id="IPR017486">
    <property type="entry name" value="PSII_PsbB"/>
</dbReference>
<dbReference type="NCBIfam" id="TIGR03039">
    <property type="entry name" value="PS_II_CP47"/>
    <property type="match status" value="1"/>
</dbReference>
<dbReference type="Pfam" id="PF00421">
    <property type="entry name" value="PSII"/>
    <property type="match status" value="1"/>
</dbReference>
<dbReference type="SUPFAM" id="SSF161077">
    <property type="entry name" value="Photosystem II antenna protein-like"/>
    <property type="match status" value="1"/>
</dbReference>
<protein>
    <recommendedName>
        <fullName evidence="1">Photosystem II CP47 reaction center protein</fullName>
    </recommendedName>
    <alternativeName>
        <fullName evidence="1">PSII 47 kDa protein</fullName>
    </alternativeName>
    <alternativeName>
        <fullName evidence="1">Protein CP-47</fullName>
    </alternativeName>
</protein>
<feature type="initiator methionine" description="Removed" evidence="2 4 5">
    <location>
        <position position="1"/>
    </location>
</feature>
<feature type="chain" id="PRO_0000077504" description="Photosystem II CP47 reaction center protein">
    <location>
        <begin position="2"/>
        <end position="507"/>
    </location>
</feature>
<feature type="topological domain" description="Cytoplasmic" evidence="4 5">
    <location>
        <begin position="2"/>
        <end position="16"/>
    </location>
</feature>
<feature type="transmembrane region" description="Helical" evidence="4 5">
    <location>
        <begin position="17"/>
        <end position="39"/>
    </location>
</feature>
<feature type="topological domain" description="Lumenal, thylakoid" evidence="4 5">
    <location>
        <begin position="40"/>
        <end position="94"/>
    </location>
</feature>
<feature type="transmembrane region" description="Helical" evidence="4 5">
    <location>
        <begin position="95"/>
        <end position="116"/>
    </location>
</feature>
<feature type="topological domain" description="Cytoplasmic" evidence="4 5">
    <location>
        <begin position="117"/>
        <end position="134"/>
    </location>
</feature>
<feature type="transmembrane region" description="Helical" evidence="4 5">
    <location>
        <begin position="135"/>
        <end position="159"/>
    </location>
</feature>
<feature type="topological domain" description="Lumenal, thylakoid" evidence="4 5">
    <location>
        <begin position="160"/>
        <end position="196"/>
    </location>
</feature>
<feature type="transmembrane region" description="Helical" evidence="4 5">
    <location>
        <begin position="197"/>
        <end position="218"/>
    </location>
</feature>
<feature type="topological domain" description="Cytoplasmic" evidence="4 5">
    <location>
        <begin position="219"/>
        <end position="233"/>
    </location>
</feature>
<feature type="transmembrane region" description="Helical" evidence="4 5">
    <location>
        <begin position="234"/>
        <end position="255"/>
    </location>
</feature>
<feature type="topological domain" description="Lumenal, thylakoid" evidence="4 5">
    <location>
        <begin position="256"/>
        <end position="450"/>
    </location>
</feature>
<feature type="transmembrane region" description="Helical" evidence="4 5">
    <location>
        <begin position="451"/>
        <end position="474"/>
    </location>
</feature>
<feature type="topological domain" description="Cytoplasmic" evidence="4 5">
    <location>
        <begin position="475"/>
        <end position="507"/>
    </location>
</feature>
<feature type="helix" evidence="9">
    <location>
        <begin position="5"/>
        <end position="12"/>
    </location>
</feature>
<feature type="helix" evidence="9">
    <location>
        <begin position="16"/>
        <end position="44"/>
    </location>
</feature>
<feature type="turn" evidence="9">
    <location>
        <begin position="50"/>
        <end position="52"/>
    </location>
</feature>
<feature type="helix" evidence="9">
    <location>
        <begin position="55"/>
        <end position="57"/>
    </location>
</feature>
<feature type="helix" evidence="9">
    <location>
        <begin position="63"/>
        <end position="68"/>
    </location>
</feature>
<feature type="strand" evidence="9">
    <location>
        <begin position="77"/>
        <end position="79"/>
    </location>
</feature>
<feature type="helix" evidence="9">
    <location>
        <begin position="93"/>
        <end position="116"/>
    </location>
</feature>
<feature type="helix" evidence="9">
    <location>
        <begin position="121"/>
        <end position="123"/>
    </location>
</feature>
<feature type="turn" evidence="9">
    <location>
        <begin position="126"/>
        <end position="128"/>
    </location>
</feature>
<feature type="strand" evidence="9">
    <location>
        <begin position="129"/>
        <end position="131"/>
    </location>
</feature>
<feature type="helix" evidence="9">
    <location>
        <begin position="135"/>
        <end position="155"/>
    </location>
</feature>
<feature type="turn" evidence="9">
    <location>
        <begin position="156"/>
        <end position="159"/>
    </location>
</feature>
<feature type="strand" evidence="8">
    <location>
        <begin position="160"/>
        <end position="163"/>
    </location>
</feature>
<feature type="strand" evidence="9">
    <location>
        <begin position="166"/>
        <end position="168"/>
    </location>
</feature>
<feature type="strand" evidence="9">
    <location>
        <begin position="173"/>
        <end position="175"/>
    </location>
</feature>
<feature type="strand" evidence="9">
    <location>
        <begin position="177"/>
        <end position="179"/>
    </location>
</feature>
<feature type="helix" evidence="9">
    <location>
        <begin position="187"/>
        <end position="190"/>
    </location>
</feature>
<feature type="helix" evidence="9">
    <location>
        <begin position="195"/>
        <end position="218"/>
    </location>
</feature>
<feature type="helix" evidence="9">
    <location>
        <begin position="223"/>
        <end position="228"/>
    </location>
</feature>
<feature type="turn" evidence="9">
    <location>
        <begin position="229"/>
        <end position="232"/>
    </location>
</feature>
<feature type="helix" evidence="9">
    <location>
        <begin position="234"/>
        <end position="258"/>
    </location>
</feature>
<feature type="helix" evidence="9">
    <location>
        <begin position="265"/>
        <end position="268"/>
    </location>
</feature>
<feature type="helix" evidence="9">
    <location>
        <begin position="272"/>
        <end position="277"/>
    </location>
</feature>
<feature type="helix" evidence="9">
    <location>
        <begin position="279"/>
        <end position="294"/>
    </location>
</feature>
<feature type="helix" evidence="9">
    <location>
        <begin position="298"/>
        <end position="303"/>
    </location>
</feature>
<feature type="helix" evidence="9">
    <location>
        <begin position="307"/>
        <end position="312"/>
    </location>
</feature>
<feature type="helix" evidence="9">
    <location>
        <begin position="315"/>
        <end position="317"/>
    </location>
</feature>
<feature type="helix" evidence="9">
    <location>
        <begin position="319"/>
        <end position="321"/>
    </location>
</feature>
<feature type="strand" evidence="10">
    <location>
        <begin position="323"/>
        <end position="326"/>
    </location>
</feature>
<feature type="helix" evidence="9">
    <location>
        <begin position="330"/>
        <end position="332"/>
    </location>
</feature>
<feature type="strand" evidence="9">
    <location>
        <begin position="336"/>
        <end position="340"/>
    </location>
</feature>
<feature type="strand" evidence="9">
    <location>
        <begin position="343"/>
        <end position="347"/>
    </location>
</feature>
<feature type="strand" evidence="9">
    <location>
        <begin position="353"/>
        <end position="356"/>
    </location>
</feature>
<feature type="strand" evidence="9">
    <location>
        <begin position="369"/>
        <end position="371"/>
    </location>
</feature>
<feature type="strand" evidence="9">
    <location>
        <begin position="377"/>
        <end position="380"/>
    </location>
</feature>
<feature type="strand" evidence="8">
    <location>
        <begin position="383"/>
        <end position="385"/>
    </location>
</feature>
<feature type="strand" evidence="10">
    <location>
        <begin position="389"/>
        <end position="391"/>
    </location>
</feature>
<feature type="helix" evidence="9">
    <location>
        <begin position="392"/>
        <end position="395"/>
    </location>
</feature>
<feature type="strand" evidence="9">
    <location>
        <begin position="398"/>
        <end position="404"/>
    </location>
</feature>
<feature type="turn" evidence="9">
    <location>
        <begin position="405"/>
        <end position="408"/>
    </location>
</feature>
<feature type="strand" evidence="10">
    <location>
        <begin position="409"/>
        <end position="411"/>
    </location>
</feature>
<feature type="helix" evidence="9">
    <location>
        <begin position="414"/>
        <end position="425"/>
    </location>
</feature>
<feature type="strand" evidence="9">
    <location>
        <begin position="430"/>
        <end position="433"/>
    </location>
</feature>
<feature type="turn" evidence="9">
    <location>
        <begin position="435"/>
        <end position="438"/>
    </location>
</feature>
<feature type="helix" evidence="9">
    <location>
        <begin position="447"/>
        <end position="474"/>
    </location>
</feature>
<feature type="helix" evidence="9">
    <location>
        <begin position="476"/>
        <end position="478"/>
    </location>
</feature>
<feature type="helix" evidence="10">
    <location>
        <begin position="488"/>
        <end position="490"/>
    </location>
</feature>
<feature type="strand" evidence="9">
    <location>
        <begin position="494"/>
        <end position="497"/>
    </location>
</feature>
<name>PSBB_SYNY3</name>
<organism>
    <name type="scientific">Synechocystis sp. (strain ATCC 27184 / PCC 6803 / Kazusa)</name>
    <dbReference type="NCBI Taxonomy" id="1111708"/>
    <lineage>
        <taxon>Bacteria</taxon>
        <taxon>Bacillati</taxon>
        <taxon>Cyanobacteriota</taxon>
        <taxon>Cyanophyceae</taxon>
        <taxon>Synechococcales</taxon>
        <taxon>Merismopediaceae</taxon>
        <taxon>Synechocystis</taxon>
    </lineage>
</organism>
<reference key="1">
    <citation type="journal article" date="1987" name="Plant Mol. Biol.">
        <title>Sequencing and modification of psbB, the gene encoding the CP-47 protein of photosystem II, in the cyanobacterium Synechocystis 6803.</title>
        <authorList>
            <person name="Vermaas W.F.J."/>
            <person name="Williams J.G.K."/>
            <person name="Arntzen C.J."/>
        </authorList>
    </citation>
    <scope>NUCLEOTIDE SEQUENCE [GENOMIC DNA]</scope>
</reference>
<reference key="2">
    <citation type="journal article" date="1995" name="DNA Res.">
        <title>Sequence analysis of the genome of the unicellular cyanobacterium Synechocystis sp. strain PCC6803. I. Sequence features in the 1 Mb region from map positions 64% to 92% of the genome.</title>
        <authorList>
            <person name="Kaneko T."/>
            <person name="Tanaka A."/>
            <person name="Sato S."/>
            <person name="Kotani H."/>
            <person name="Sazuka T."/>
            <person name="Miyajima N."/>
            <person name="Sugiura M."/>
            <person name="Tabata S."/>
        </authorList>
    </citation>
    <scope>NUCLEOTIDE SEQUENCE [LARGE SCALE GENOMIC DNA]</scope>
    <source>
        <strain>ATCC 27184 / PCC 6803 / N-1</strain>
    </source>
</reference>
<reference key="3">
    <citation type="journal article" date="1996" name="DNA Res.">
        <title>Sequence analysis of the genome of the unicellular cyanobacterium Synechocystis sp. strain PCC6803. II. Sequence determination of the entire genome and assignment of potential protein-coding regions.</title>
        <authorList>
            <person name="Kaneko T."/>
            <person name="Sato S."/>
            <person name="Kotani H."/>
            <person name="Tanaka A."/>
            <person name="Asamizu E."/>
            <person name="Nakamura Y."/>
            <person name="Miyajima N."/>
            <person name="Hirosawa M."/>
            <person name="Sugiura M."/>
            <person name="Sasamoto S."/>
            <person name="Kimura T."/>
            <person name="Hosouchi T."/>
            <person name="Matsuno A."/>
            <person name="Muraki A."/>
            <person name="Nakazaki N."/>
            <person name="Naruo K."/>
            <person name="Okumura S."/>
            <person name="Shimpo S."/>
            <person name="Takeuchi C."/>
            <person name="Wada T."/>
            <person name="Watanabe A."/>
            <person name="Yamada M."/>
            <person name="Yasuda M."/>
            <person name="Tabata S."/>
        </authorList>
    </citation>
    <scope>NUCLEOTIDE SEQUENCE [LARGE SCALE GENOMIC DNA]</scope>
    <source>
        <strain>ATCC 27184 / PCC 6803 / Kazusa</strain>
    </source>
</reference>
<reference key="4">
    <citation type="journal article" date="2002" name="Biochemistry">
        <title>Proteomic analysis of a highly active photosystem II preparation from the cyanobacterium Synechocystis sp. PCC 6803 reveals the presence of novel polypeptides.</title>
        <authorList>
            <person name="Kashino Y."/>
            <person name="Lauber W.M."/>
            <person name="Carroll J.A."/>
            <person name="Wang Q."/>
            <person name="Whitmarsh J."/>
            <person name="Satoh K."/>
            <person name="Pakrasi H.B."/>
        </authorList>
    </citation>
    <scope>PROTEIN SEQUENCE OF 2-11</scope>
    <scope>IDENTIFICATION BY MASS SPECTROMETRY</scope>
    <scope>SUBUNIT</scope>
    <scope>SUBCELLULAR LOCATION</scope>
    <source>
        <strain>ATCC 27184 / PCC 6803 / Kazusa</strain>
    </source>
</reference>
<reference key="5">
    <citation type="journal article" date="2014" name="Proc. Natl. Acad. Sci. U.S.A.">
        <title>MS-based cross-linking analysis reveals the location of the PsbQ protein in cyanobacterial photosystem II.</title>
        <authorList>
            <person name="Liu H."/>
            <person name="Zhang H."/>
            <person name="Weisz D.A."/>
            <person name="Vidavsky I."/>
            <person name="Gross M.L."/>
            <person name="Pakrasi H.B."/>
        </authorList>
    </citation>
    <scope>PROTEIN SEQUENCE OF 424-444</scope>
    <scope>SUBUNIT</scope>
    <scope>SUBCELLULAR LOCATION</scope>
    <source>
        <strain>ATCC 27184 / PCC 6803 / Kazusa</strain>
    </source>
</reference>
<reference evidence="6 7" key="6">
    <citation type="journal article" date="2022" name="Proc. Natl. Acad. Sci. U.S.A.">
        <title>High-resolution cryo-electron microscopy structure of photosystem II from the mesophilic cyanobacterium, Synechocystis sp. PCC 6803.</title>
        <authorList>
            <person name="Gisriel C.J."/>
            <person name="Wang J."/>
            <person name="Liu J."/>
            <person name="Flesher D.A."/>
            <person name="Reiss K.M."/>
            <person name="Huang H.L."/>
            <person name="Yang K.R."/>
            <person name="Armstrong W.H."/>
            <person name="Gunner M.R."/>
            <person name="Batista V.S."/>
            <person name="Debus R.J."/>
            <person name="Brudvig G.W."/>
        </authorList>
    </citation>
    <scope>STRUCTURE BY ELECTRON MICROSCOPY (1.93 ANGSTROMS) OF 2-504</scope>
    <scope>FUNCTION</scope>
    <scope>COFACTOR</scope>
    <scope>SUBUNIT</scope>
    <scope>SUBCELLULAR LOCATION</scope>
    <scope>TOPOLOGY</scope>
    <source>
        <strain>ATCC 27184 / PCC 6803 / Kazusa</strain>
    </source>
</reference>